<accession>P0C1Z7</accession>
<sequence length="44" mass="5046">YSRCQLQGFNCVVRSYGLPTIPCCRGLTCRSYFPGSTYGRCQRF</sequence>
<evidence type="ECO:0000250" key="1"/>
<evidence type="ECO:0000269" key="2">
    <source>
    </source>
</evidence>
<organism>
    <name type="scientific">Tachypleus tridentatus</name>
    <name type="common">Japanese horseshoe crab</name>
    <dbReference type="NCBI Taxonomy" id="6853"/>
    <lineage>
        <taxon>Eukaryota</taxon>
        <taxon>Metazoa</taxon>
        <taxon>Ecdysozoa</taxon>
        <taxon>Arthropoda</taxon>
        <taxon>Chelicerata</taxon>
        <taxon>Merostomata</taxon>
        <taxon>Xiphosura</taxon>
        <taxon>Limulidae</taxon>
        <taxon>Tachypleus</taxon>
    </lineage>
</organism>
<feature type="peptide" id="PRO_0000256689" description="Tachystatin-A1">
    <location>
        <begin position="1"/>
        <end position="44"/>
    </location>
</feature>
<feature type="site" description="May be important for binding to chitin">
    <location>
        <position position="9"/>
    </location>
</feature>
<feature type="disulfide bond" evidence="1">
    <location>
        <begin position="4"/>
        <end position="24"/>
    </location>
</feature>
<feature type="disulfide bond" evidence="1">
    <location>
        <begin position="11"/>
        <end position="29"/>
    </location>
</feature>
<feature type="disulfide bond" evidence="1">
    <location>
        <begin position="23"/>
        <end position="41"/>
    </location>
</feature>
<reference key="1">
    <citation type="journal article" date="1999" name="J. Biol. Chem.">
        <title>Horseshoe crab hemocyte-derived antimicrobial polypeptides, tachystatins, with sequence similarity to spider neurotoxins.</title>
        <authorList>
            <person name="Osaki T."/>
            <person name="Omotezako M."/>
            <person name="Nagayama R."/>
            <person name="Hirata M."/>
            <person name="Iwanaga S."/>
            <person name="Kasahara J."/>
            <person name="Hattori J."/>
            <person name="Ito I."/>
            <person name="Sugiyama H."/>
            <person name="Kawabata S."/>
        </authorList>
    </citation>
    <scope>PROTEIN SEQUENCE</scope>
    <scope>MASS SPECTROMETRY</scope>
    <scope>TISSUE SPECIFICITY</scope>
    <source>
        <tissue>Hemocyte</tissue>
    </source>
</reference>
<dbReference type="SMR" id="P0C1Z7"/>
<dbReference type="GO" id="GO:0005576">
    <property type="term" value="C:extracellular region"/>
    <property type="evidence" value="ECO:0007669"/>
    <property type="project" value="UniProtKB-SubCell"/>
</dbReference>
<dbReference type="GO" id="GO:0042742">
    <property type="term" value="P:defense response to bacterium"/>
    <property type="evidence" value="ECO:0007669"/>
    <property type="project" value="UniProtKB-KW"/>
</dbReference>
<dbReference type="GO" id="GO:0050832">
    <property type="term" value="P:defense response to fungus"/>
    <property type="evidence" value="ECO:0007669"/>
    <property type="project" value="UniProtKB-KW"/>
</dbReference>
<dbReference type="GO" id="GO:0031640">
    <property type="term" value="P:killing of cells of another organism"/>
    <property type="evidence" value="ECO:0007669"/>
    <property type="project" value="UniProtKB-KW"/>
</dbReference>
<dbReference type="Gene3D" id="4.10.40.20">
    <property type="match status" value="1"/>
</dbReference>
<dbReference type="InterPro" id="IPR022717">
    <property type="entry name" value="Antimicrobial_tachystatin_A"/>
</dbReference>
<dbReference type="Pfam" id="PF11406">
    <property type="entry name" value="Tachystatin_A"/>
    <property type="match status" value="1"/>
</dbReference>
<dbReference type="SUPFAM" id="SSF57059">
    <property type="entry name" value="omega toxin-like"/>
    <property type="match status" value="1"/>
</dbReference>
<comment type="function">
    <text>Exhibits stronger antimicrobial activity against the Gram-positive bacteria (S.aureus (IC(50) is 4.2 ug/ml)) and fungi (C.albicans (IC(50) is 3.0 ug/ml) and P.pastoris (IC(50) is 0.5 ug/ml)) than Gram-negative bacteria (E.coli (IC(50) is 25 ug/ml)). Binds to chitin (8.4 uM are required to obtain 50% of binding). Does not cause hemolysis on sheep erythrocytes. Has no blocking activity on the P-type calcium channel.</text>
</comment>
<comment type="subcellular location">
    <subcellularLocation>
        <location>Secreted</location>
    </subcellularLocation>
</comment>
<comment type="tissue specificity">
    <text evidence="2">Granular hemocytes, small secretory granules.</text>
</comment>
<comment type="domain">
    <text evidence="1">The presence of a 'disulfide through disulfide knot' structurally defines this protein as a knottin.</text>
</comment>
<comment type="mass spectrometry" mass="5039.4" method="Electrospray" evidence="2"/>
<name>TACA1_TACTR</name>
<keyword id="KW-0044">Antibiotic</keyword>
<keyword id="KW-0929">Antimicrobial</keyword>
<keyword id="KW-0903">Direct protein sequencing</keyword>
<keyword id="KW-1015">Disulfide bond</keyword>
<keyword id="KW-0295">Fungicide</keyword>
<keyword id="KW-0960">Knottin</keyword>
<keyword id="KW-0964">Secreted</keyword>
<protein>
    <recommendedName>
        <fullName>Tachystatin-A1</fullName>
    </recommendedName>
</protein>
<proteinExistence type="evidence at protein level"/>